<sequence length="504" mass="55212">MSFSVDVLANIAIELQRGIGHQDRFQRLITTLRQVLECDASALLRYDSRQFIPLAIDGLAKDVLGRRFALEGHPRLEAIARAGDVVRFPADSELPDPYDGLIPGQESLKVHACVGLPLFAGQNLIGALTLDGMQPDQFDVFSDEELRLIAALAAGALSNALLIEQLESQNMLPGEAAPFEAVKQTQMIGLSPGMTQLKKEIEIVAASDLNVLISGETGTGKELVAKAIHEASPRAVNPLVYLNCAALPESVAESELFGHVKGAFTGAISNRSGKFEMADNGTLFLDEIGELSLALQAKLLRVLQYGDIQRVGDDRSLRVDVRVLAATNRDLREEVLAGRFRADLFHRLSVFPLSVPPLRERGDDVILLAGYFCEQCRLRLGLSRVVLSAGARNLLQHYNFPGNVRELEHAIHRAVVLARATRSGDEVILEAQHFAFPEVTLPPPEVAAVPVVKQNLREATEAFQRETIRQALAQNHHNWAACARMLETDVANLHRLAKRLGLKD</sequence>
<name>NORR_ECOL6</name>
<organism>
    <name type="scientific">Escherichia coli O6:H1 (strain CFT073 / ATCC 700928 / UPEC)</name>
    <dbReference type="NCBI Taxonomy" id="199310"/>
    <lineage>
        <taxon>Bacteria</taxon>
        <taxon>Pseudomonadati</taxon>
        <taxon>Pseudomonadota</taxon>
        <taxon>Gammaproteobacteria</taxon>
        <taxon>Enterobacterales</taxon>
        <taxon>Enterobacteriaceae</taxon>
        <taxon>Escherichia</taxon>
    </lineage>
</organism>
<feature type="chain" id="PRO_0000081154" description="Anaerobic nitric oxide reductase transcription regulator NorR">
    <location>
        <begin position="1"/>
        <end position="504"/>
    </location>
</feature>
<feature type="domain" description="Sigma-54 factor interaction" evidence="1">
    <location>
        <begin position="187"/>
        <end position="416"/>
    </location>
</feature>
<feature type="DNA-binding region" description="H-T-H motif" evidence="1">
    <location>
        <begin position="479"/>
        <end position="498"/>
    </location>
</feature>
<feature type="binding site" evidence="1">
    <location>
        <begin position="215"/>
        <end position="222"/>
    </location>
    <ligand>
        <name>ATP</name>
        <dbReference type="ChEBI" id="CHEBI:30616"/>
    </ligand>
</feature>
<feature type="binding site" evidence="1">
    <location>
        <begin position="278"/>
        <end position="287"/>
    </location>
    <ligand>
        <name>ATP</name>
        <dbReference type="ChEBI" id="CHEBI:30616"/>
    </ligand>
</feature>
<feature type="modified residue" description="4-aspartylphosphate" evidence="1">
    <location>
        <position position="57"/>
    </location>
</feature>
<protein>
    <recommendedName>
        <fullName evidence="1">Anaerobic nitric oxide reductase transcription regulator NorR</fullName>
    </recommendedName>
</protein>
<dbReference type="EMBL" id="AE014075">
    <property type="protein sequence ID" value="AAN81714.1"/>
    <property type="status" value="ALT_INIT"/>
    <property type="molecule type" value="Genomic_DNA"/>
</dbReference>
<dbReference type="RefSeq" id="WP_000010762.1">
    <property type="nucleotide sequence ID" value="NZ_CP051263.1"/>
</dbReference>
<dbReference type="SMR" id="Q8FEN6"/>
<dbReference type="STRING" id="199310.c3263"/>
<dbReference type="DNASU" id="1039057"/>
<dbReference type="KEGG" id="ecc:c3263"/>
<dbReference type="eggNOG" id="COG3604">
    <property type="taxonomic scope" value="Bacteria"/>
</dbReference>
<dbReference type="HOGENOM" id="CLU_000445_125_0_6"/>
<dbReference type="UniPathway" id="UPA00638"/>
<dbReference type="Proteomes" id="UP000001410">
    <property type="component" value="Chromosome"/>
</dbReference>
<dbReference type="GO" id="GO:0005524">
    <property type="term" value="F:ATP binding"/>
    <property type="evidence" value="ECO:0007669"/>
    <property type="project" value="UniProtKB-UniRule"/>
</dbReference>
<dbReference type="GO" id="GO:0016887">
    <property type="term" value="F:ATP hydrolysis activity"/>
    <property type="evidence" value="ECO:0007669"/>
    <property type="project" value="InterPro"/>
</dbReference>
<dbReference type="GO" id="GO:0003677">
    <property type="term" value="F:DNA binding"/>
    <property type="evidence" value="ECO:0007669"/>
    <property type="project" value="UniProtKB-KW"/>
</dbReference>
<dbReference type="GO" id="GO:0003700">
    <property type="term" value="F:DNA-binding transcription factor activity"/>
    <property type="evidence" value="ECO:0007669"/>
    <property type="project" value="UniProtKB-UniRule"/>
</dbReference>
<dbReference type="GO" id="GO:0000160">
    <property type="term" value="P:phosphorelay signal transduction system"/>
    <property type="evidence" value="ECO:0007669"/>
    <property type="project" value="UniProtKB-UniRule"/>
</dbReference>
<dbReference type="CDD" id="cd00009">
    <property type="entry name" value="AAA"/>
    <property type="match status" value="1"/>
</dbReference>
<dbReference type="FunFam" id="1.10.10.60:FF:000188">
    <property type="entry name" value="Anaerobic nitric oxide reductase transcription regulator NorR"/>
    <property type="match status" value="1"/>
</dbReference>
<dbReference type="FunFam" id="1.10.8.60:FF:000045">
    <property type="entry name" value="Anaerobic nitric oxide reductase transcription regulator NorR"/>
    <property type="match status" value="1"/>
</dbReference>
<dbReference type="FunFam" id="3.30.450.40:FF:000021">
    <property type="entry name" value="Anaerobic nitric oxide reductase transcription regulator NorR"/>
    <property type="match status" value="1"/>
</dbReference>
<dbReference type="FunFam" id="3.40.50.300:FF:000006">
    <property type="entry name" value="DNA-binding transcriptional regulator NtrC"/>
    <property type="match status" value="1"/>
</dbReference>
<dbReference type="Gene3D" id="1.10.8.60">
    <property type="match status" value="1"/>
</dbReference>
<dbReference type="Gene3D" id="3.30.450.40">
    <property type="match status" value="1"/>
</dbReference>
<dbReference type="Gene3D" id="1.10.10.60">
    <property type="entry name" value="Homeodomain-like"/>
    <property type="match status" value="1"/>
</dbReference>
<dbReference type="Gene3D" id="3.40.50.300">
    <property type="entry name" value="P-loop containing nucleotide triphosphate hydrolases"/>
    <property type="match status" value="1"/>
</dbReference>
<dbReference type="HAMAP" id="MF_01314">
    <property type="entry name" value="NorR"/>
    <property type="match status" value="1"/>
</dbReference>
<dbReference type="InterPro" id="IPR003593">
    <property type="entry name" value="AAA+_ATPase"/>
</dbReference>
<dbReference type="InterPro" id="IPR003018">
    <property type="entry name" value="GAF"/>
</dbReference>
<dbReference type="InterPro" id="IPR029016">
    <property type="entry name" value="GAF-like_dom_sf"/>
</dbReference>
<dbReference type="InterPro" id="IPR009057">
    <property type="entry name" value="Homeodomain-like_sf"/>
</dbReference>
<dbReference type="InterPro" id="IPR023944">
    <property type="entry name" value="NorR"/>
</dbReference>
<dbReference type="InterPro" id="IPR027417">
    <property type="entry name" value="P-loop_NTPase"/>
</dbReference>
<dbReference type="InterPro" id="IPR002078">
    <property type="entry name" value="Sigma_54_int"/>
</dbReference>
<dbReference type="InterPro" id="IPR025662">
    <property type="entry name" value="Sigma_54_int_dom_ATP-bd_1"/>
</dbReference>
<dbReference type="InterPro" id="IPR025943">
    <property type="entry name" value="Sigma_54_int_dom_ATP-bd_2"/>
</dbReference>
<dbReference type="InterPro" id="IPR025944">
    <property type="entry name" value="Sigma_54_int_dom_CS"/>
</dbReference>
<dbReference type="NCBIfam" id="NF003451">
    <property type="entry name" value="PRK05022.1"/>
    <property type="match status" value="1"/>
</dbReference>
<dbReference type="PANTHER" id="PTHR32071:SF35">
    <property type="entry name" value="ANAEROBIC NITRIC OXIDE REDUCTASE TRANSCRIPTION REGULATOR NORR"/>
    <property type="match status" value="1"/>
</dbReference>
<dbReference type="PANTHER" id="PTHR32071">
    <property type="entry name" value="TRANSCRIPTIONAL REGULATORY PROTEIN"/>
    <property type="match status" value="1"/>
</dbReference>
<dbReference type="Pfam" id="PF01590">
    <property type="entry name" value="GAF"/>
    <property type="match status" value="1"/>
</dbReference>
<dbReference type="Pfam" id="PF00158">
    <property type="entry name" value="Sigma54_activat"/>
    <property type="match status" value="1"/>
</dbReference>
<dbReference type="SMART" id="SM00382">
    <property type="entry name" value="AAA"/>
    <property type="match status" value="1"/>
</dbReference>
<dbReference type="SMART" id="SM00065">
    <property type="entry name" value="GAF"/>
    <property type="match status" value="1"/>
</dbReference>
<dbReference type="SUPFAM" id="SSF55781">
    <property type="entry name" value="GAF domain-like"/>
    <property type="match status" value="1"/>
</dbReference>
<dbReference type="SUPFAM" id="SSF46689">
    <property type="entry name" value="Homeodomain-like"/>
    <property type="match status" value="1"/>
</dbReference>
<dbReference type="SUPFAM" id="SSF52540">
    <property type="entry name" value="P-loop containing nucleoside triphosphate hydrolases"/>
    <property type="match status" value="1"/>
</dbReference>
<dbReference type="PROSITE" id="PS00675">
    <property type="entry name" value="SIGMA54_INTERACT_1"/>
    <property type="match status" value="1"/>
</dbReference>
<dbReference type="PROSITE" id="PS00676">
    <property type="entry name" value="SIGMA54_INTERACT_2"/>
    <property type="match status" value="1"/>
</dbReference>
<dbReference type="PROSITE" id="PS00688">
    <property type="entry name" value="SIGMA54_INTERACT_3"/>
    <property type="match status" value="1"/>
</dbReference>
<dbReference type="PROSITE" id="PS50045">
    <property type="entry name" value="SIGMA54_INTERACT_4"/>
    <property type="match status" value="1"/>
</dbReference>
<gene>
    <name evidence="1" type="primary">norR</name>
    <name type="ordered locus">c3263</name>
</gene>
<evidence type="ECO:0000255" key="1">
    <source>
        <dbReference type="HAMAP-Rule" id="MF_01314"/>
    </source>
</evidence>
<evidence type="ECO:0000305" key="2"/>
<comment type="function">
    <text evidence="1">Required for the expression of anaerobic nitric oxide (NO) reductase, acts as a transcriptional activator for at least the norVW operon. Activation also requires sigma-54.</text>
</comment>
<comment type="pathway">
    <text evidence="1">Nitrogen metabolism; nitric oxide reduction.</text>
</comment>
<comment type="sequence caution" evidence="2">
    <conflict type="erroneous initiation">
        <sequence resource="EMBL-CDS" id="AAN81714"/>
    </conflict>
</comment>
<accession>Q8FEN6</accession>
<keyword id="KW-0067">ATP-binding</keyword>
<keyword id="KW-0238">DNA-binding</keyword>
<keyword id="KW-0547">Nucleotide-binding</keyword>
<keyword id="KW-0597">Phosphoprotein</keyword>
<keyword id="KW-1185">Reference proteome</keyword>
<keyword id="KW-0804">Transcription</keyword>
<keyword id="KW-0805">Transcription regulation</keyword>
<reference key="1">
    <citation type="journal article" date="2002" name="Proc. Natl. Acad. Sci. U.S.A.">
        <title>Extensive mosaic structure revealed by the complete genome sequence of uropathogenic Escherichia coli.</title>
        <authorList>
            <person name="Welch R.A."/>
            <person name="Burland V."/>
            <person name="Plunkett G. III"/>
            <person name="Redford P."/>
            <person name="Roesch P."/>
            <person name="Rasko D."/>
            <person name="Buckles E.L."/>
            <person name="Liou S.-R."/>
            <person name="Boutin A."/>
            <person name="Hackett J."/>
            <person name="Stroud D."/>
            <person name="Mayhew G.F."/>
            <person name="Rose D.J."/>
            <person name="Zhou S."/>
            <person name="Schwartz D.C."/>
            <person name="Perna N.T."/>
            <person name="Mobley H.L.T."/>
            <person name="Donnenberg M.S."/>
            <person name="Blattner F.R."/>
        </authorList>
    </citation>
    <scope>NUCLEOTIDE SEQUENCE [LARGE SCALE GENOMIC DNA]</scope>
    <source>
        <strain>CFT073 / ATCC 700928 / UPEC</strain>
    </source>
</reference>
<proteinExistence type="inferred from homology"/>